<comment type="subunit">
    <text evidence="1">Forms oligomers.</text>
</comment>
<comment type="subcellular location">
    <subcellularLocation>
        <location evidence="1">Cytoplasm</location>
        <location evidence="1">Nucleoid</location>
    </subcellularLocation>
</comment>
<comment type="similarity">
    <text evidence="1">Belongs to the MraZ family.</text>
</comment>
<dbReference type="EMBL" id="CP000282">
    <property type="protein sequence ID" value="ABD80101.1"/>
    <property type="molecule type" value="Genomic_DNA"/>
</dbReference>
<dbReference type="RefSeq" id="WP_011467322.1">
    <property type="nucleotide sequence ID" value="NC_007912.1"/>
</dbReference>
<dbReference type="SMR" id="Q21MH8"/>
<dbReference type="STRING" id="203122.Sde_0839"/>
<dbReference type="GeneID" id="98612521"/>
<dbReference type="KEGG" id="sde:Sde_0839"/>
<dbReference type="eggNOG" id="COG2001">
    <property type="taxonomic scope" value="Bacteria"/>
</dbReference>
<dbReference type="HOGENOM" id="CLU_107907_2_0_6"/>
<dbReference type="OrthoDB" id="9807753at2"/>
<dbReference type="Proteomes" id="UP000001947">
    <property type="component" value="Chromosome"/>
</dbReference>
<dbReference type="GO" id="GO:0005737">
    <property type="term" value="C:cytoplasm"/>
    <property type="evidence" value="ECO:0007669"/>
    <property type="project" value="UniProtKB-UniRule"/>
</dbReference>
<dbReference type="GO" id="GO:0009295">
    <property type="term" value="C:nucleoid"/>
    <property type="evidence" value="ECO:0007669"/>
    <property type="project" value="UniProtKB-SubCell"/>
</dbReference>
<dbReference type="GO" id="GO:0003700">
    <property type="term" value="F:DNA-binding transcription factor activity"/>
    <property type="evidence" value="ECO:0007669"/>
    <property type="project" value="UniProtKB-UniRule"/>
</dbReference>
<dbReference type="GO" id="GO:0000976">
    <property type="term" value="F:transcription cis-regulatory region binding"/>
    <property type="evidence" value="ECO:0007669"/>
    <property type="project" value="TreeGrafter"/>
</dbReference>
<dbReference type="GO" id="GO:2000143">
    <property type="term" value="P:negative regulation of DNA-templated transcription initiation"/>
    <property type="evidence" value="ECO:0007669"/>
    <property type="project" value="TreeGrafter"/>
</dbReference>
<dbReference type="CDD" id="cd16321">
    <property type="entry name" value="MraZ_C"/>
    <property type="match status" value="1"/>
</dbReference>
<dbReference type="CDD" id="cd16320">
    <property type="entry name" value="MraZ_N"/>
    <property type="match status" value="1"/>
</dbReference>
<dbReference type="Gene3D" id="3.40.1550.20">
    <property type="entry name" value="Transcriptional regulator MraZ domain"/>
    <property type="match status" value="1"/>
</dbReference>
<dbReference type="HAMAP" id="MF_01008">
    <property type="entry name" value="MraZ"/>
    <property type="match status" value="1"/>
</dbReference>
<dbReference type="InterPro" id="IPR003444">
    <property type="entry name" value="MraZ"/>
</dbReference>
<dbReference type="InterPro" id="IPR035644">
    <property type="entry name" value="MraZ_C"/>
</dbReference>
<dbReference type="InterPro" id="IPR020603">
    <property type="entry name" value="MraZ_dom"/>
</dbReference>
<dbReference type="InterPro" id="IPR035642">
    <property type="entry name" value="MraZ_N"/>
</dbReference>
<dbReference type="InterPro" id="IPR038619">
    <property type="entry name" value="MraZ_sf"/>
</dbReference>
<dbReference type="InterPro" id="IPR007159">
    <property type="entry name" value="SpoVT-AbrB_dom"/>
</dbReference>
<dbReference type="InterPro" id="IPR037914">
    <property type="entry name" value="SpoVT-AbrB_sf"/>
</dbReference>
<dbReference type="NCBIfam" id="TIGR00242">
    <property type="entry name" value="division/cell wall cluster transcriptional repressor MraZ"/>
    <property type="match status" value="1"/>
</dbReference>
<dbReference type="PANTHER" id="PTHR34701">
    <property type="entry name" value="TRANSCRIPTIONAL REGULATOR MRAZ"/>
    <property type="match status" value="1"/>
</dbReference>
<dbReference type="PANTHER" id="PTHR34701:SF1">
    <property type="entry name" value="TRANSCRIPTIONAL REGULATOR MRAZ"/>
    <property type="match status" value="1"/>
</dbReference>
<dbReference type="Pfam" id="PF02381">
    <property type="entry name" value="MraZ"/>
    <property type="match status" value="2"/>
</dbReference>
<dbReference type="SUPFAM" id="SSF89447">
    <property type="entry name" value="AbrB/MazE/MraZ-like"/>
    <property type="match status" value="1"/>
</dbReference>
<dbReference type="PROSITE" id="PS51740">
    <property type="entry name" value="SPOVT_ABRB"/>
    <property type="match status" value="2"/>
</dbReference>
<proteinExistence type="inferred from homology"/>
<protein>
    <recommendedName>
        <fullName>Transcriptional regulator MraZ</fullName>
    </recommendedName>
</protein>
<keyword id="KW-0963">Cytoplasm</keyword>
<keyword id="KW-0238">DNA-binding</keyword>
<keyword id="KW-1185">Reference proteome</keyword>
<keyword id="KW-0677">Repeat</keyword>
<keyword id="KW-0804">Transcription</keyword>
<keyword id="KW-0805">Transcription regulation</keyword>
<evidence type="ECO:0000255" key="1">
    <source>
        <dbReference type="HAMAP-Rule" id="MF_01008"/>
    </source>
</evidence>
<evidence type="ECO:0000255" key="2">
    <source>
        <dbReference type="PROSITE-ProRule" id="PRU01076"/>
    </source>
</evidence>
<reference key="1">
    <citation type="journal article" date="2008" name="PLoS Genet.">
        <title>Complete genome sequence of the complex carbohydrate-degrading marine bacterium, Saccharophagus degradans strain 2-40 T.</title>
        <authorList>
            <person name="Weiner R.M."/>
            <person name="Taylor L.E. II"/>
            <person name="Henrissat B."/>
            <person name="Hauser L."/>
            <person name="Land M."/>
            <person name="Coutinho P.M."/>
            <person name="Rancurel C."/>
            <person name="Saunders E.H."/>
            <person name="Longmire A.G."/>
            <person name="Zhang H."/>
            <person name="Bayer E.A."/>
            <person name="Gilbert H.J."/>
            <person name="Larimer F."/>
            <person name="Zhulin I.B."/>
            <person name="Ekborg N.A."/>
            <person name="Lamed R."/>
            <person name="Richardson P.M."/>
            <person name="Borovok I."/>
            <person name="Hutcheson S."/>
        </authorList>
    </citation>
    <scope>NUCLEOTIDE SEQUENCE [LARGE SCALE GENOMIC DNA]</scope>
    <source>
        <strain>2-40 / ATCC 43961 / DSM 17024</strain>
    </source>
</reference>
<sequence>MFQGSHAITMDAKGRMAIPAKYRDTLADACEGRIVVTAHTQDRCLLVYPETEWAEILPKIEALPSFNKAALRAQRLLIGYATTLELDGNGRVLLPPTLRDYANFDKKLMLVGLGKKFELWSEEAWFASIADVDDGDELPQEMLTLSL</sequence>
<name>MRAZ_SACD2</name>
<organism>
    <name type="scientific">Saccharophagus degradans (strain 2-40 / ATCC 43961 / DSM 17024)</name>
    <dbReference type="NCBI Taxonomy" id="203122"/>
    <lineage>
        <taxon>Bacteria</taxon>
        <taxon>Pseudomonadati</taxon>
        <taxon>Pseudomonadota</taxon>
        <taxon>Gammaproteobacteria</taxon>
        <taxon>Cellvibrionales</taxon>
        <taxon>Cellvibrionaceae</taxon>
        <taxon>Saccharophagus</taxon>
    </lineage>
</organism>
<feature type="chain" id="PRO_1000062925" description="Transcriptional regulator MraZ">
    <location>
        <begin position="1"/>
        <end position="147"/>
    </location>
</feature>
<feature type="domain" description="SpoVT-AbrB 1" evidence="2">
    <location>
        <begin position="5"/>
        <end position="52"/>
    </location>
</feature>
<feature type="domain" description="SpoVT-AbrB 2" evidence="2">
    <location>
        <begin position="81"/>
        <end position="124"/>
    </location>
</feature>
<accession>Q21MH8</accession>
<gene>
    <name evidence="1" type="primary">mraZ</name>
    <name type="ordered locus">Sde_0839</name>
</gene>